<evidence type="ECO:0000250" key="1"/>
<evidence type="ECO:0000250" key="2">
    <source>
        <dbReference type="UniProtKB" id="P23196"/>
    </source>
</evidence>
<evidence type="ECO:0000250" key="3">
    <source>
        <dbReference type="UniProtKB" id="P27695"/>
    </source>
</evidence>
<evidence type="ECO:0000250" key="4">
    <source>
        <dbReference type="UniProtKB" id="P28352"/>
    </source>
</evidence>
<evidence type="ECO:0000255" key="5">
    <source>
        <dbReference type="PROSITE-ProRule" id="PRU00764"/>
    </source>
</evidence>
<evidence type="ECO:0000256" key="6">
    <source>
        <dbReference type="SAM" id="MobiDB-lite"/>
    </source>
</evidence>
<evidence type="ECO:0000305" key="7"/>
<gene>
    <name type="primary">APEX1</name>
    <name type="synonym">APE</name>
    <name type="synonym">APEX</name>
    <name type="synonym">BAP1</name>
    <name type="synonym">REF1</name>
</gene>
<comment type="function">
    <text evidence="3 4">Multifunctional protein that plays a central role in the cellular response to oxidative stress. The two major activities of APEX1 are DNA repair and redox regulation of transcriptional factors (By similarity). Functions as an apurinic/apyrimidinic (AP) endodeoxyribonuclease in the base excision repair (BER) pathway of DNA lesions induced by oxidative and alkylating agents. Initiates repair of AP sites in DNA by catalyzing hydrolytic incision of the phosphodiester backbone immediately adjacent to the damage, generating a single-strand break with 5'-deoxyribose phosphate and 3'-hydroxyl ends. Also incises at AP sites in the DNA strand of DNA/RNA hybrids, single-stranded DNA regions of R-loop structures, and single-stranded RNA molecules (By similarity). Operates at switch sites of immunoglobulin (Ig) constant regions where it mediates Ig isotype class switch recombination. Processes AP sites induced by successive action of AICDA and UNG. Generates staggered nicks in opposite DNA strands resulting in the formation of double-strand DNA breaks that are finally resolved via non-homologous end joining repair pathway (By similarity). Has 3'-5' exodeoxyribonuclease activity on mismatched deoxyribonucleotides at the 3' termini of nicked or gapped DNA molecules during short-patch BER (By similarity). Possesses DNA 3' phosphodiesterase activity capable of removing lesions (such as phosphoglycolate and 8-oxoguanine) blocking the 3' side of DNA strand breaks (By similarity). Also acts as an endoribonuclease involved in the control of single-stranded RNA metabolism. Plays a role in regulating MYC mRNA turnover by preferentially cleaving in between UA and CA dinucleotides of the MYC coding region determinant (CRD). In association with NMD1, plays a role in the rRNA quality control process during cell cycle progression (By similarity). Acts as a loading factor for POLB onto non-incised AP sites in DNA and stimulates the 5'-terminal deoxyribose 5'-phosphate (dRp) excision activity of POLB (By similarity). Exerts reversible nuclear redox activity to regulate DNA binding affinity and transcriptional activity of transcriptional factors by controlling the redox status of their DNA-binding domain, such as the FOS/JUN AP-1 complex after exposure to IR (By similarity). Involved in calcium-dependent down-regulation of parathyroid hormone (PTH) expression by binding to negative calcium response elements (nCaREs). Together with HNRNPL or the dimer XRCC5/XRCC6, associates with nCaRE, acting as an activator of transcriptional repression (By similarity). May also play a role in the epigenetic regulation of gene expression by participating in DNA demethylation (By similarity). Stimulates the YBX1-mediated MDR1 promoter activity, when acetylated at Lys-6 and Lys-7, leading to drug resistance (By similarity). Plays a role in protection from granzyme-mediated cellular repair leading to cell death (By similarity). Binds DNA and RNA. Associates, together with YBX1, on the MDR1 promoter. Together with NPM1, associates with rRNA (By similarity).</text>
</comment>
<comment type="catalytic activity">
    <reaction evidence="3">
        <text>a deoxyribonucleotide-2'-deoxyribose-5'-monophosphate-DNA + H2O = a 5'-end 2'-deoxyribose-5'-monophosphate-DNA + a 3'-end 2'-deoxyribonucleotide-DNA + H(+)</text>
        <dbReference type="Rhea" id="RHEA:81527"/>
        <dbReference type="Rhea" id="RHEA-COMP:13863"/>
        <dbReference type="Rhea" id="RHEA-COMP:19699"/>
        <dbReference type="Rhea" id="RHEA-COMP:19703"/>
        <dbReference type="ChEBI" id="CHEBI:15377"/>
        <dbReference type="ChEBI" id="CHEBI:15378"/>
        <dbReference type="ChEBI" id="CHEBI:138148"/>
        <dbReference type="ChEBI" id="CHEBI:231912"/>
        <dbReference type="ChEBI" id="CHEBI:231913"/>
    </reaction>
    <physiologicalReaction direction="left-to-right" evidence="3">
        <dbReference type="Rhea" id="RHEA:81528"/>
    </physiologicalReaction>
</comment>
<comment type="catalytic activity">
    <reaction evidence="3">
        <text>Exonucleolytic cleavage in the 3'- to 5'-direction to yield nucleoside 5'-phosphates.</text>
        <dbReference type="EC" id="3.1.11.2"/>
    </reaction>
</comment>
<comment type="catalytic activity">
    <reaction evidence="3">
        <text>a 3'-end 2'-deoxyribonucleotide-3'-phosphoglycolate-DNA + H2O = 2-phosphoglycolate + a 3'-end 2'-deoxyribonucleotide-DNA + H(+)</text>
        <dbReference type="Rhea" id="RHEA:81467"/>
        <dbReference type="Rhea" id="RHEA-COMP:13863"/>
        <dbReference type="Rhea" id="RHEA-COMP:19686"/>
        <dbReference type="ChEBI" id="CHEBI:15377"/>
        <dbReference type="ChEBI" id="CHEBI:15378"/>
        <dbReference type="ChEBI" id="CHEBI:58033"/>
        <dbReference type="ChEBI" id="CHEBI:138148"/>
        <dbReference type="ChEBI" id="CHEBI:231894"/>
    </reaction>
    <physiologicalReaction direction="left-to-right" evidence="3">
        <dbReference type="Rhea" id="RHEA:81468"/>
    </physiologicalReaction>
</comment>
<comment type="catalytic activity">
    <reaction evidence="3">
        <text>a 3'-end 2'-deoxyribonucleotide-8-oxoguanine-DNA + H2O = 8-oxo-dGMP + a 3'-end 2'-deoxyribonucleotide-DNA + H(+)</text>
        <dbReference type="Rhea" id="RHEA:81471"/>
        <dbReference type="Rhea" id="RHEA-COMP:13863"/>
        <dbReference type="Rhea" id="RHEA-COMP:19687"/>
        <dbReference type="ChEBI" id="CHEBI:15377"/>
        <dbReference type="ChEBI" id="CHEBI:15378"/>
        <dbReference type="ChEBI" id="CHEBI:63224"/>
        <dbReference type="ChEBI" id="CHEBI:138148"/>
        <dbReference type="ChEBI" id="CHEBI:231896"/>
    </reaction>
    <physiologicalReaction direction="left-to-right" evidence="3">
        <dbReference type="Rhea" id="RHEA:81472"/>
    </physiologicalReaction>
</comment>
<comment type="cofactor">
    <cofactor evidence="3">
        <name>Mg(2+)</name>
        <dbReference type="ChEBI" id="CHEBI:18420"/>
    </cofactor>
    <cofactor evidence="3">
        <name>Mn(2+)</name>
        <dbReference type="ChEBI" id="CHEBI:29035"/>
    </cofactor>
    <text evidence="3">Probably binds two magnesium or manganese ions per subunit.</text>
</comment>
<comment type="activity regulation">
    <text evidence="3">NPM1 stimulates endodeoxyribonuclease activity on double-stranded DNA with AP sites, but inhibits endoribonuclease activity on single-stranded RNA containing AP sites.</text>
</comment>
<comment type="subunit">
    <text evidence="3">Monomer. Homodimer; disulfide-linked. Component of the SET complex, composed of at least APEX1, SET, ANP32A, HMGB2, NME1 and TREX1. Associates with the dimer XRCC5/XRCC6 in a DNA-dependent manner. Interacts with SIRT1; the interaction is increased in the context of genotoxic stress. Interacts with HDAC1, HDAC2 and HDAC3; the interactions are not dependent on the APEX1 acetylation status. Interacts with XRCC1; the interaction is induced by SIRT1 and increased with the APEX1 acetylated form. Interacts with NPM1 (via N-terminal domain); the interaction is RNA-dependent and decreases in hydrogen peroxide-damaged cells. Interacts (via N-terminus) with YBX1 (via C-terminus); the interaction is increased in presence of APEX1 acetylated at Lys-6 and Lys-7. Interacts with HNRNPL; the interaction is DNA-dependent. Interacts (via N-terminus) with KPNA1 and KPNA2. Interacts with TXN; the interaction stimulates the FOS/JUN AP-1 complex DNA-binding activity in a redox-dependent manner. Interacts with GZMA, KRT8, MDM2, POLB, PRDX6, PRPF19, RPLP0, TOMM20 and WDR77. Binds to CDK5 (By similarity).</text>
</comment>
<comment type="subcellular location">
    <subcellularLocation>
        <location>Nucleus</location>
    </subcellularLocation>
    <subcellularLocation>
        <location evidence="1">Nucleus</location>
        <location evidence="1">Nucleolus</location>
    </subcellularLocation>
    <subcellularLocation>
        <location evidence="5">Nucleus speckle</location>
    </subcellularLocation>
    <subcellularLocation>
        <location evidence="1">Endoplasmic reticulum</location>
    </subcellularLocation>
    <subcellularLocation>
        <location evidence="5">Cytoplasm</location>
    </subcellularLocation>
    <text evidence="1">Detected in the cytoplasm of B-cells stimulated to switch. Colocalized with SIRT1 in the nucleus. Colocalized with YBX1 in nuclear speckles after genotoxic stress. Together with OGG1 is recruited to nuclear speckles in UVA-irradiated cells. Colocalized with nucleolin and NPM1 in the nucleolus. Its nucleolar localization is cell cycle dependent and requires active rRNA transcription (By similarity). Colocalized with calreticulin in the endoplasmic reticulum. Translocation from the nucleus to the cytoplasm is stimulated in presence of nitric oxide (NO) and function in a CRM1-dependent manner, possibly as a consequence of demasking a nuclear export signal (amino acid position 64-80). S-nitrosylation at Cys-93 and Cys-310 regulates its nuclear-cytosolic shuttling. Ubiquitinated form is localized predominantly in the cytoplasm (By similarity).</text>
</comment>
<comment type="subcellular location">
    <molecule>DNA repair nuclease/redox regulator APEX1, mitochondrial</molecule>
    <subcellularLocation>
        <location>Mitochondrion</location>
    </subcellularLocation>
    <text evidence="1">Translocation from the cytoplasm to the mitochondria is mediated by ROS signaling and cleavage mediated by granzyme A. Tom20-dependent translocated mitochondrial APEX1 level is significantly increased after genotoxic stress. The cleaved APEX2 is only detected in mitochondria (By similarity).</text>
</comment>
<comment type="domain">
    <text evidence="1">The N-terminus contains the redox activity while the C-terminus exerts the DNA AP-endodeoxyribonuclease activity; both function are independent in their actions. An unconventional mitochondrial targeting sequence (MTS) is harbored within the C-terminus, that appears to be masked by the N-terminal sequence containing the nuclear localization signal (NLS), that probably blocks the interaction between the MTS and Tom proteins (By similarity).</text>
</comment>
<comment type="PTM">
    <text evidence="3">Phosphorylated. Phosphorylation by kinase PKC or casein kinase CK2 results in enhanced redox activity that stimulates binding of the FOS/JUN AP-1 complex to its cognate binding site. AP-endodeoxyribonuclease activity is not affected by CK2-mediated phosphorylation. Phosphorylation of Thr-233 by CDK5 in response to MPP(+)/MPTP (1-methyl-4-phenylpyridinium) reduces AP-endodeoxyribonuclease activity resulting in accumulation of DNA damage and contributing to neuronal death (By similarity).</text>
</comment>
<comment type="PTM">
    <text evidence="3">Acetylated on Lys-6 and Lys-7. Acetylation is increased by the transcriptional coactivator EP300 acetyltransferase, genotoxic agents like H(2)O(2) and methyl methanesulfonate (MMS). Acetylation increases its binding affinity to the negative calcium response element (nCaRE) DNA promoter. The acetylated form induces a stronger binding of YBX1 to the Y-box sequence in the MDR1 promoter than the unacetylated form. Deacetylated on lysines. Lys-6 and Lys-7 are deacetylated by SIRT1 (By similarity).</text>
</comment>
<comment type="PTM">
    <text evidence="3">Cleaved at Lys-31 by granzyme A to create the mitochondrial form; leading in reduction of binding to DNA, AP endodeoxyribonuclease activity, redox activation of transcription factors and to enhanced cell death. Cleaved by granzyme K; leading to intracellular ROS accumulation and enhanced cell death after oxidative stress (By similarity).</text>
</comment>
<comment type="PTM">
    <text evidence="3">Cys-69 and Cys-93 are nitrosylated in response to nitric oxide (NO) and lead to the exposure of the nuclear export signal (NES).</text>
</comment>
<comment type="PTM">
    <text evidence="3">Ubiquitinated by MDM2; leading to translocation to the cytoplasm and proteasomal degradation.</text>
</comment>
<comment type="miscellaneous">
    <text evidence="2">The specific activity of the cleaved mitochondrial endodeoxyribonuclease appears to be about 3-fold higher than of the full-length form. Extract of mitochondria, but not of nuclei or cytosol, cleaves recombinant APEX1 to generate a mitochondrial APEX1-sized product (By similarity).</text>
</comment>
<comment type="similarity">
    <text evidence="7">Belongs to the DNA repair enzymes AP/ExoA family.</text>
</comment>
<organism>
    <name type="scientific">Pan troglodytes</name>
    <name type="common">Chimpanzee</name>
    <dbReference type="NCBI Taxonomy" id="9598"/>
    <lineage>
        <taxon>Eukaryota</taxon>
        <taxon>Metazoa</taxon>
        <taxon>Chordata</taxon>
        <taxon>Craniata</taxon>
        <taxon>Vertebrata</taxon>
        <taxon>Euteleostomi</taxon>
        <taxon>Mammalia</taxon>
        <taxon>Eutheria</taxon>
        <taxon>Euarchontoglires</taxon>
        <taxon>Primates</taxon>
        <taxon>Haplorrhini</taxon>
        <taxon>Catarrhini</taxon>
        <taxon>Hominidae</taxon>
        <taxon>Pan</taxon>
    </lineage>
</organism>
<dbReference type="EC" id="3.1.11.2" evidence="3"/>
<dbReference type="EC" id="3.1.21.-" evidence="3"/>
<dbReference type="EMBL" id="DQ977332">
    <property type="protein sequence ID" value="ABM91939.1"/>
    <property type="molecule type" value="Genomic_DNA"/>
</dbReference>
<dbReference type="RefSeq" id="NP_001074954.1">
    <property type="nucleotide sequence ID" value="NM_001081485.1"/>
</dbReference>
<dbReference type="RefSeq" id="XP_009425631.1">
    <property type="nucleotide sequence ID" value="XM_009427356.2"/>
</dbReference>
<dbReference type="RefSeq" id="XP_009425633.1">
    <property type="nucleotide sequence ID" value="XM_009427358.1"/>
</dbReference>
<dbReference type="BMRB" id="A2T6Y4"/>
<dbReference type="SMR" id="A2T6Y4"/>
<dbReference type="FunCoup" id="A2T6Y4">
    <property type="interactions" value="2191"/>
</dbReference>
<dbReference type="STRING" id="9598.ENSPTRP00000010344"/>
<dbReference type="PaxDb" id="9598-ENSPTRP00000010344"/>
<dbReference type="Ensembl" id="ENSPTRT00000011181.2">
    <property type="protein sequence ID" value="ENSPTRP00000010344.1"/>
    <property type="gene ID" value="ENSPTRG00000006093.2"/>
</dbReference>
<dbReference type="GeneID" id="465200"/>
<dbReference type="KEGG" id="ptr:465200"/>
<dbReference type="CTD" id="328"/>
<dbReference type="VGNC" id="VGNC:8393">
    <property type="gene designation" value="APEX1"/>
</dbReference>
<dbReference type="eggNOG" id="KOG1294">
    <property type="taxonomic scope" value="Eukaryota"/>
</dbReference>
<dbReference type="GeneTree" id="ENSGT00530000063540"/>
<dbReference type="HOGENOM" id="CLU_027539_1_3_1"/>
<dbReference type="InParanoid" id="A2T6Y4"/>
<dbReference type="OMA" id="WWSYRGR"/>
<dbReference type="TreeFam" id="TF315048"/>
<dbReference type="Proteomes" id="UP000002277">
    <property type="component" value="Chromosome 14"/>
</dbReference>
<dbReference type="Bgee" id="ENSPTRG00000006093">
    <property type="expression patterns" value="Expressed in fibroblast and 21 other cell types or tissues"/>
</dbReference>
<dbReference type="GO" id="GO:0005813">
    <property type="term" value="C:centrosome"/>
    <property type="evidence" value="ECO:0007669"/>
    <property type="project" value="Ensembl"/>
</dbReference>
<dbReference type="GO" id="GO:0005737">
    <property type="term" value="C:cytoplasm"/>
    <property type="evidence" value="ECO:0000250"/>
    <property type="project" value="UniProtKB"/>
</dbReference>
<dbReference type="GO" id="GO:0005783">
    <property type="term" value="C:endoplasmic reticulum"/>
    <property type="evidence" value="ECO:0007669"/>
    <property type="project" value="UniProtKB-SubCell"/>
</dbReference>
<dbReference type="GO" id="GO:0005739">
    <property type="term" value="C:mitochondrion"/>
    <property type="evidence" value="ECO:0000250"/>
    <property type="project" value="UniProtKB"/>
</dbReference>
<dbReference type="GO" id="GO:0016607">
    <property type="term" value="C:nuclear speck"/>
    <property type="evidence" value="ECO:0000250"/>
    <property type="project" value="UniProtKB"/>
</dbReference>
<dbReference type="GO" id="GO:0005730">
    <property type="term" value="C:nucleolus"/>
    <property type="evidence" value="ECO:0000250"/>
    <property type="project" value="UniProtKB"/>
</dbReference>
<dbReference type="GO" id="GO:0005654">
    <property type="term" value="C:nucleoplasm"/>
    <property type="evidence" value="ECO:0000250"/>
    <property type="project" value="UniProtKB"/>
</dbReference>
<dbReference type="GO" id="GO:0005634">
    <property type="term" value="C:nucleus"/>
    <property type="evidence" value="ECO:0000250"/>
    <property type="project" value="UniProtKB"/>
</dbReference>
<dbReference type="GO" id="GO:0048471">
    <property type="term" value="C:perinuclear region of cytoplasm"/>
    <property type="evidence" value="ECO:0007669"/>
    <property type="project" value="Ensembl"/>
</dbReference>
<dbReference type="GO" id="GO:0008408">
    <property type="term" value="F:3'-5' exonuclease activity"/>
    <property type="evidence" value="ECO:0000250"/>
    <property type="project" value="UniProtKB"/>
</dbReference>
<dbReference type="GO" id="GO:0031490">
    <property type="term" value="F:chromatin DNA binding"/>
    <property type="evidence" value="ECO:0000250"/>
    <property type="project" value="UniProtKB"/>
</dbReference>
<dbReference type="GO" id="GO:0052720">
    <property type="term" value="F:class II DNA-(apurinic or apyrimidinic site) endonuclease activity"/>
    <property type="evidence" value="ECO:0000250"/>
    <property type="project" value="UniProtKB"/>
</dbReference>
<dbReference type="GO" id="GO:0003684">
    <property type="term" value="F:damaged DNA binding"/>
    <property type="evidence" value="ECO:0000250"/>
    <property type="project" value="UniProtKB"/>
</dbReference>
<dbReference type="GO" id="GO:0140431">
    <property type="term" value="F:DNA-(abasic site) binding"/>
    <property type="evidence" value="ECO:0000250"/>
    <property type="project" value="UniProtKB"/>
</dbReference>
<dbReference type="GO" id="GO:0003906">
    <property type="term" value="F:DNA-(apurinic or apyrimidinic site) endonuclease activity"/>
    <property type="evidence" value="ECO:0000250"/>
    <property type="project" value="UniProtKB"/>
</dbReference>
<dbReference type="GO" id="GO:0008311">
    <property type="term" value="F:double-stranded DNA 3'-5' DNA exonuclease activity"/>
    <property type="evidence" value="ECO:0000318"/>
    <property type="project" value="GO_Central"/>
</dbReference>
<dbReference type="GO" id="GO:0003691">
    <property type="term" value="F:double-stranded telomeric DNA binding"/>
    <property type="evidence" value="ECO:0007669"/>
    <property type="project" value="Ensembl"/>
</dbReference>
<dbReference type="GO" id="GO:0046872">
    <property type="term" value="F:metal ion binding"/>
    <property type="evidence" value="ECO:0007669"/>
    <property type="project" value="UniProtKB-KW"/>
</dbReference>
<dbReference type="GO" id="GO:0016491">
    <property type="term" value="F:oxidoreductase activity"/>
    <property type="evidence" value="ECO:0000250"/>
    <property type="project" value="UniProtKB"/>
</dbReference>
<dbReference type="GO" id="GO:0090580">
    <property type="term" value="F:phosphodiesterase activity, acting on 3'-phosphoglycolate-terminated DNA strands"/>
    <property type="evidence" value="ECO:0007669"/>
    <property type="project" value="Ensembl"/>
</dbReference>
<dbReference type="GO" id="GO:0008081">
    <property type="term" value="F:phosphoric diester hydrolase activity"/>
    <property type="evidence" value="ECO:0000318"/>
    <property type="project" value="GO_Central"/>
</dbReference>
<dbReference type="GO" id="GO:0003723">
    <property type="term" value="F:RNA binding"/>
    <property type="evidence" value="ECO:0007669"/>
    <property type="project" value="UniProtKB-KW"/>
</dbReference>
<dbReference type="GO" id="GO:0016890">
    <property type="term" value="F:site-specific endodeoxyribonuclease activity, specific for altered base"/>
    <property type="evidence" value="ECO:0000250"/>
    <property type="project" value="UniProtKB"/>
</dbReference>
<dbReference type="GO" id="GO:0003713">
    <property type="term" value="F:transcription coactivator activity"/>
    <property type="evidence" value="ECO:0007669"/>
    <property type="project" value="Ensembl"/>
</dbReference>
<dbReference type="GO" id="GO:0006284">
    <property type="term" value="P:base-excision repair"/>
    <property type="evidence" value="ECO:0000318"/>
    <property type="project" value="GO_Central"/>
</dbReference>
<dbReference type="GO" id="GO:0045454">
    <property type="term" value="P:cell redox homeostasis"/>
    <property type="evidence" value="ECO:0007669"/>
    <property type="project" value="Ensembl"/>
</dbReference>
<dbReference type="GO" id="GO:0006308">
    <property type="term" value="P:DNA catabolic process"/>
    <property type="evidence" value="ECO:0007669"/>
    <property type="project" value="Ensembl"/>
</dbReference>
<dbReference type="GO" id="GO:0006310">
    <property type="term" value="P:DNA recombination"/>
    <property type="evidence" value="ECO:0007669"/>
    <property type="project" value="UniProtKB-KW"/>
</dbReference>
<dbReference type="GO" id="GO:0006281">
    <property type="term" value="P:DNA repair"/>
    <property type="evidence" value="ECO:0000250"/>
    <property type="project" value="UniProtKB"/>
</dbReference>
<dbReference type="GO" id="GO:0044029">
    <property type="term" value="P:positive regulation of gene expression via chromosomal CpG island demethylation"/>
    <property type="evidence" value="ECO:0000250"/>
    <property type="project" value="UniProtKB"/>
</dbReference>
<dbReference type="GO" id="GO:0045944">
    <property type="term" value="P:positive regulation of transcription by RNA polymerase II"/>
    <property type="evidence" value="ECO:0007669"/>
    <property type="project" value="Ensembl"/>
</dbReference>
<dbReference type="GO" id="GO:0042981">
    <property type="term" value="P:regulation of apoptotic process"/>
    <property type="evidence" value="ECO:0000250"/>
    <property type="project" value="UniProtKB"/>
</dbReference>
<dbReference type="GO" id="GO:0043488">
    <property type="term" value="P:regulation of mRNA stability"/>
    <property type="evidence" value="ECO:0000250"/>
    <property type="project" value="UniProtKB"/>
</dbReference>
<dbReference type="GO" id="GO:0097698">
    <property type="term" value="P:telomere maintenance via base-excision repair"/>
    <property type="evidence" value="ECO:0007669"/>
    <property type="project" value="Ensembl"/>
</dbReference>
<dbReference type="CDD" id="cd09087">
    <property type="entry name" value="Ape1-like_AP-endo"/>
    <property type="match status" value="1"/>
</dbReference>
<dbReference type="FunFam" id="3.60.10.10:FF:000009">
    <property type="entry name" value="DNA-(apurinic or apyrimidinic site) lyase"/>
    <property type="match status" value="1"/>
</dbReference>
<dbReference type="Gene3D" id="3.60.10.10">
    <property type="entry name" value="Endonuclease/exonuclease/phosphatase"/>
    <property type="match status" value="1"/>
</dbReference>
<dbReference type="InterPro" id="IPR004808">
    <property type="entry name" value="AP_endonuc_1"/>
</dbReference>
<dbReference type="InterPro" id="IPR020847">
    <property type="entry name" value="AP_endonuclease_F1_BS"/>
</dbReference>
<dbReference type="InterPro" id="IPR020848">
    <property type="entry name" value="AP_endonuclease_F1_CS"/>
</dbReference>
<dbReference type="InterPro" id="IPR036691">
    <property type="entry name" value="Endo/exonu/phosph_ase_sf"/>
</dbReference>
<dbReference type="InterPro" id="IPR005135">
    <property type="entry name" value="Endo/exonuclease/phosphatase"/>
</dbReference>
<dbReference type="NCBIfam" id="TIGR00195">
    <property type="entry name" value="exoDNase_III"/>
    <property type="match status" value="1"/>
</dbReference>
<dbReference type="NCBIfam" id="TIGR00633">
    <property type="entry name" value="xth"/>
    <property type="match status" value="1"/>
</dbReference>
<dbReference type="PANTHER" id="PTHR22748">
    <property type="entry name" value="AP ENDONUCLEASE"/>
    <property type="match status" value="1"/>
</dbReference>
<dbReference type="PANTHER" id="PTHR22748:SF6">
    <property type="entry name" value="DNA-(APURINIC OR APYRIMIDINIC SITE) ENDONUCLEASE"/>
    <property type="match status" value="1"/>
</dbReference>
<dbReference type="Pfam" id="PF03372">
    <property type="entry name" value="Exo_endo_phos"/>
    <property type="match status" value="1"/>
</dbReference>
<dbReference type="SUPFAM" id="SSF56219">
    <property type="entry name" value="DNase I-like"/>
    <property type="match status" value="1"/>
</dbReference>
<dbReference type="PROSITE" id="PS00726">
    <property type="entry name" value="AP_NUCLEASE_F1_1"/>
    <property type="match status" value="1"/>
</dbReference>
<dbReference type="PROSITE" id="PS00727">
    <property type="entry name" value="AP_NUCLEASE_F1_2"/>
    <property type="match status" value="1"/>
</dbReference>
<dbReference type="PROSITE" id="PS00728">
    <property type="entry name" value="AP_NUCLEASE_F1_3"/>
    <property type="match status" value="1"/>
</dbReference>
<dbReference type="PROSITE" id="PS51435">
    <property type="entry name" value="AP_NUCLEASE_F1_4"/>
    <property type="match status" value="1"/>
</dbReference>
<sequence length="318" mass="35569">MPKRGKKGAVAEDGDELRTEPEAKKSKTAAKKNDKEAAGEGPALYEDPPDQKTSPSGKPATLKICSWNVDGLRAWIKKKGLDWVKEEAPDILCLQETKCSENKLPAELQELPGLSHQYWSAPSDKEGYSGVGLLSRQCPLKVSYGIGEEEHDQEGRVIVAEFDSFVLVTAYVPNAGRGLVRLEYRQRWDEAFRKFLKGLASRKPLVLCGDLNVAHEEIDLRNPKGNKKNAGFTPQERQGFGELLQAVPLADSFRHLYPNTPYAYTFWTYMMNARSKNVGWRLDYFLLSHSLLPALCDSKIRSKALGSDHCPITLYLAL</sequence>
<protein>
    <recommendedName>
        <fullName>DNA repair nuclease/redox regulator APEX1</fullName>
        <ecNumber evidence="3">3.1.11.2</ecNumber>
        <ecNumber evidence="3">3.1.21.-</ecNumber>
    </recommendedName>
    <alternativeName>
        <fullName>APEX nuclease</fullName>
        <shortName>APEN</shortName>
    </alternativeName>
    <alternativeName>
        <fullName>Apurinic-apyrimidinic endonuclease 1</fullName>
        <shortName>AP endonuclease 1</shortName>
    </alternativeName>
    <alternativeName>
        <fullName>Redox factor-1</fullName>
        <shortName>REF-1</shortName>
    </alternativeName>
    <component>
        <recommendedName>
            <fullName>DNA repair nuclease/redox regulator APEX1, mitochondrial</fullName>
        </recommendedName>
    </component>
</protein>
<keyword id="KW-0007">Acetylation</keyword>
<keyword id="KW-0010">Activator</keyword>
<keyword id="KW-0165">Cleavage on pair of basic residues</keyword>
<keyword id="KW-0963">Cytoplasm</keyword>
<keyword id="KW-1015">Disulfide bond</keyword>
<keyword id="KW-0227">DNA damage</keyword>
<keyword id="KW-0233">DNA recombination</keyword>
<keyword id="KW-0234">DNA repair</keyword>
<keyword id="KW-0238">DNA-binding</keyword>
<keyword id="KW-0255">Endonuclease</keyword>
<keyword id="KW-0256">Endoplasmic reticulum</keyword>
<keyword id="KW-0269">Exonuclease</keyword>
<keyword id="KW-0378">Hydrolase</keyword>
<keyword id="KW-0460">Magnesium</keyword>
<keyword id="KW-0479">Metal-binding</keyword>
<keyword id="KW-0496">Mitochondrion</keyword>
<keyword id="KW-0540">Nuclease</keyword>
<keyword id="KW-0539">Nucleus</keyword>
<keyword id="KW-0597">Phosphoprotein</keyword>
<keyword id="KW-1185">Reference proteome</keyword>
<keyword id="KW-0678">Repressor</keyword>
<keyword id="KW-0694">RNA-binding</keyword>
<keyword id="KW-0702">S-nitrosylation</keyword>
<keyword id="KW-0804">Transcription</keyword>
<keyword id="KW-0805">Transcription regulation</keyword>
<keyword id="KW-0832">Ubl conjugation</keyword>
<feature type="chain" id="PRO_0000285547" description="DNA repair nuclease/redox regulator APEX1">
    <location>
        <begin position="1"/>
        <end position="318"/>
    </location>
</feature>
<feature type="chain" id="PRO_0000402809" description="DNA repair nuclease/redox regulator APEX1, mitochondrial">
    <location>
        <begin position="32"/>
        <end position="318"/>
    </location>
</feature>
<feature type="region of interest" description="Disordered" evidence="6">
    <location>
        <begin position="1"/>
        <end position="60"/>
    </location>
</feature>
<feature type="region of interest" description="Necessary for interaction with YBX1, binding to RNA, association together with NPM1 to rRNA, endoribonuclease activity on abasic RNA and localization in the nucleoli" evidence="1">
    <location>
        <begin position="1"/>
        <end position="33"/>
    </location>
</feature>
<feature type="region of interest" description="Necessary for interaction with NPM1 and for efficient rRNA binding" evidence="1">
    <location>
        <begin position="23"/>
        <end position="33"/>
    </location>
</feature>
<feature type="region of interest" description="Mitochondrial targeting sequence (MTS)" evidence="1">
    <location>
        <begin position="289"/>
        <end position="318"/>
    </location>
</feature>
<feature type="short sequence motif" description="Nuclear localization signal (NLS)" evidence="1">
    <location>
        <begin position="8"/>
        <end position="13"/>
    </location>
</feature>
<feature type="short sequence motif" description="Nuclear export signal (NES)" evidence="1">
    <location>
        <begin position="64"/>
        <end position="80"/>
    </location>
</feature>
<feature type="compositionally biased region" description="Basic and acidic residues" evidence="6">
    <location>
        <begin position="16"/>
        <end position="38"/>
    </location>
</feature>
<feature type="active site" evidence="1">
    <location>
        <position position="171"/>
    </location>
</feature>
<feature type="active site" description="Proton donor/acceptor" evidence="1">
    <location>
        <position position="210"/>
    </location>
</feature>
<feature type="binding site" evidence="1">
    <location>
        <position position="70"/>
    </location>
    <ligand>
        <name>Mg(2+)</name>
        <dbReference type="ChEBI" id="CHEBI:18420"/>
        <label>1</label>
    </ligand>
</feature>
<feature type="binding site" evidence="1">
    <location>
        <position position="96"/>
    </location>
    <ligand>
        <name>Mg(2+)</name>
        <dbReference type="ChEBI" id="CHEBI:18420"/>
        <label>1</label>
    </ligand>
</feature>
<feature type="binding site" evidence="1">
    <location>
        <position position="210"/>
    </location>
    <ligand>
        <name>Mg(2+)</name>
        <dbReference type="ChEBI" id="CHEBI:18420"/>
        <label>2</label>
    </ligand>
</feature>
<feature type="binding site" evidence="1">
    <location>
        <position position="212"/>
    </location>
    <ligand>
        <name>Mg(2+)</name>
        <dbReference type="ChEBI" id="CHEBI:18420"/>
        <label>2</label>
    </ligand>
</feature>
<feature type="binding site" evidence="1">
    <location>
        <position position="308"/>
    </location>
    <ligand>
        <name>Mg(2+)</name>
        <dbReference type="ChEBI" id="CHEBI:18420"/>
        <label>1</label>
    </ligand>
</feature>
<feature type="site" description="Cleavage; by granzyme A" evidence="1">
    <location>
        <begin position="31"/>
        <end position="32"/>
    </location>
</feature>
<feature type="site" description="Transition state stabilizer" evidence="1">
    <location>
        <position position="212"/>
    </location>
</feature>
<feature type="site" description="Important for catalytic activity" evidence="1">
    <location>
        <position position="283"/>
    </location>
</feature>
<feature type="site" description="Interaction with DNA substrate" evidence="1">
    <location>
        <position position="309"/>
    </location>
</feature>
<feature type="modified residue" description="N6-acetyllysine; by EP300" evidence="3">
    <location>
        <position position="6"/>
    </location>
</feature>
<feature type="modified residue" description="N6-acetyllysine; by EP300" evidence="3">
    <location>
        <position position="7"/>
    </location>
</feature>
<feature type="modified residue" description="N6-acetyllysine" evidence="3">
    <location>
        <position position="27"/>
    </location>
</feature>
<feature type="modified residue" description="N6-acetyllysine" evidence="3">
    <location>
        <position position="31"/>
    </location>
</feature>
<feature type="modified residue" description="N6-acetyllysine" evidence="3">
    <location>
        <position position="32"/>
    </location>
</feature>
<feature type="modified residue" description="N6-acetyllysine" evidence="3">
    <location>
        <position position="35"/>
    </location>
</feature>
<feature type="modified residue" description="Phosphoserine" evidence="3">
    <location>
        <position position="54"/>
    </location>
</feature>
<feature type="modified residue" description="S-nitrosocysteine; alternate" evidence="3">
    <location>
        <position position="65"/>
    </location>
</feature>
<feature type="modified residue" description="S-nitrosocysteine; alternate" evidence="3">
    <location>
        <position position="93"/>
    </location>
</feature>
<feature type="modified residue" description="N6-acetyllysine" evidence="3">
    <location>
        <position position="197"/>
    </location>
</feature>
<feature type="modified residue" description="Phosphothreonine; by CDK5" evidence="4">
    <location>
        <position position="233"/>
    </location>
</feature>
<feature type="modified residue" description="S-nitrosocysteine" evidence="3">
    <location>
        <position position="310"/>
    </location>
</feature>
<feature type="disulfide bond" description="Alternate" evidence="1">
    <location>
        <begin position="65"/>
        <end position="93"/>
    </location>
</feature>
<accession>A2T6Y4</accession>
<reference key="1">
    <citation type="submission" date="2006-08" db="EMBL/GenBank/DDBJ databases">
        <title>Positive selection in transcription factor genes on the human lineage.</title>
        <authorList>
            <person name="Nickel G.C."/>
            <person name="Tefft D.L."/>
            <person name="Trevarthen K."/>
            <person name="Funt J."/>
            <person name="Adams M.D."/>
        </authorList>
    </citation>
    <scope>NUCLEOTIDE SEQUENCE [GENOMIC DNA]</scope>
</reference>
<proteinExistence type="inferred from homology"/>
<name>APEX1_PANTR</name>